<protein>
    <recommendedName>
        <fullName>Flavodoxin</fullName>
    </recommendedName>
</protein>
<reference key="1">
    <citation type="journal article" date="1986" name="Mol. Gen. Genet.">
        <title>Nucleotide sequence of the nifLA operon of Klebsiella oxytoca NG13 and characterization of the gene products.</title>
        <authorList>
            <person name="Kim Y.-M."/>
            <person name="Ahn K.-J."/>
            <person name="Beppu T."/>
            <person name="Uozumi T."/>
        </authorList>
    </citation>
    <scope>NUCLEOTIDE SEQUENCE [GENOMIC DNA]</scope>
    <source>
        <strain>NG13</strain>
    </source>
</reference>
<organism>
    <name type="scientific">Klebsiella oxytoca</name>
    <dbReference type="NCBI Taxonomy" id="571"/>
    <lineage>
        <taxon>Bacteria</taxon>
        <taxon>Pseudomonadati</taxon>
        <taxon>Pseudomonadota</taxon>
        <taxon>Gammaproteobacteria</taxon>
        <taxon>Enterobacterales</taxon>
        <taxon>Enterobacteriaceae</taxon>
        <taxon>Klebsiella/Raoultella group</taxon>
        <taxon>Klebsiella</taxon>
    </lineage>
</organism>
<feature type="initiator methionine" description="Removed" evidence="1">
    <location>
        <position position="1"/>
    </location>
</feature>
<feature type="chain" id="PRO_0000171637" description="Flavodoxin">
    <location>
        <begin position="2"/>
        <end position="62" status="greater than"/>
    </location>
</feature>
<feature type="domain" description="Flavodoxin-like" evidence="2">
    <location>
        <begin position="4"/>
        <end position="62" status="greater than"/>
    </location>
</feature>
<feature type="non-terminal residue">
    <location>
        <position position="62"/>
    </location>
</feature>
<accession>P56268</accession>
<gene>
    <name type="primary">nifF</name>
</gene>
<dbReference type="EMBL" id="D00339">
    <property type="protein sequence ID" value="BAA00243.1"/>
    <property type="molecule type" value="Genomic_DNA"/>
</dbReference>
<dbReference type="SMR" id="P56268"/>
<dbReference type="STRING" id="571.AB185_16965"/>
<dbReference type="eggNOG" id="COG0716">
    <property type="taxonomic scope" value="Bacteria"/>
</dbReference>
<dbReference type="GO" id="GO:0009055">
    <property type="term" value="F:electron transfer activity"/>
    <property type="evidence" value="ECO:0007669"/>
    <property type="project" value="InterPro"/>
</dbReference>
<dbReference type="GO" id="GO:0010181">
    <property type="term" value="F:FMN binding"/>
    <property type="evidence" value="ECO:0007669"/>
    <property type="project" value="InterPro"/>
</dbReference>
<dbReference type="GO" id="GO:0009399">
    <property type="term" value="P:nitrogen fixation"/>
    <property type="evidence" value="ECO:0007669"/>
    <property type="project" value="UniProtKB-KW"/>
</dbReference>
<dbReference type="Gene3D" id="3.40.50.360">
    <property type="match status" value="1"/>
</dbReference>
<dbReference type="InterPro" id="IPR050619">
    <property type="entry name" value="Flavodoxin"/>
</dbReference>
<dbReference type="InterPro" id="IPR008254">
    <property type="entry name" value="Flavodoxin/NO_synth"/>
</dbReference>
<dbReference type="InterPro" id="IPR001226">
    <property type="entry name" value="Flavodoxin_CS"/>
</dbReference>
<dbReference type="InterPro" id="IPR029039">
    <property type="entry name" value="Flavoprotein-like_sf"/>
</dbReference>
<dbReference type="PANTHER" id="PTHR42809:SF1">
    <property type="entry name" value="FLAVODOXIN 1"/>
    <property type="match status" value="1"/>
</dbReference>
<dbReference type="PANTHER" id="PTHR42809">
    <property type="entry name" value="FLAVODOXIN 2"/>
    <property type="match status" value="1"/>
</dbReference>
<dbReference type="Pfam" id="PF00258">
    <property type="entry name" value="Flavodoxin_1"/>
    <property type="match status" value="1"/>
</dbReference>
<dbReference type="SUPFAM" id="SSF52218">
    <property type="entry name" value="Flavoproteins"/>
    <property type="match status" value="1"/>
</dbReference>
<dbReference type="PROSITE" id="PS00201">
    <property type="entry name" value="FLAVODOXIN"/>
    <property type="match status" value="1"/>
</dbReference>
<dbReference type="PROSITE" id="PS50902">
    <property type="entry name" value="FLAVODOXIN_LIKE"/>
    <property type="match status" value="1"/>
</dbReference>
<name>FLAW_KLEOX</name>
<sequence length="62" mass="6705">MANIGIFFGTDTGKTRKIAKMIHKQLGELADAPVNINRTTLDDFMAYPVLLLGTPTLGDGQL</sequence>
<evidence type="ECO:0000250" key="1"/>
<evidence type="ECO:0000255" key="2">
    <source>
        <dbReference type="PROSITE-ProRule" id="PRU00088"/>
    </source>
</evidence>
<evidence type="ECO:0000305" key="3"/>
<keyword id="KW-0249">Electron transport</keyword>
<keyword id="KW-0285">Flavoprotein</keyword>
<keyword id="KW-0288">FMN</keyword>
<keyword id="KW-0535">Nitrogen fixation</keyword>
<keyword id="KW-0813">Transport</keyword>
<proteinExistence type="inferred from homology"/>
<comment type="function">
    <text>Low-potential electron donor to a number of redox enzymes. NifF is the electron donor to nitrogenase.</text>
</comment>
<comment type="cofactor">
    <cofactor>
        <name>FMN</name>
        <dbReference type="ChEBI" id="CHEBI:58210"/>
    </cofactor>
</comment>
<comment type="similarity">
    <text evidence="3">Belongs to the flavodoxin family.</text>
</comment>